<reference key="1">
    <citation type="journal article" date="2009" name="J. Bacteriol.">
        <title>Genome sequence of Azotobacter vinelandii, an obligate aerobe specialized to support diverse anaerobic metabolic processes.</title>
        <authorList>
            <person name="Setubal J.C."/>
            <person name="Dos Santos P."/>
            <person name="Goldman B.S."/>
            <person name="Ertesvaag H."/>
            <person name="Espin G."/>
            <person name="Rubio L.M."/>
            <person name="Valla S."/>
            <person name="Almeida N.F."/>
            <person name="Balasubramanian D."/>
            <person name="Cromes L."/>
            <person name="Curatti L."/>
            <person name="Du Z."/>
            <person name="Godsy E."/>
            <person name="Goodner B."/>
            <person name="Hellner-Burris K."/>
            <person name="Hernandez J.A."/>
            <person name="Houmiel K."/>
            <person name="Imperial J."/>
            <person name="Kennedy C."/>
            <person name="Larson T.J."/>
            <person name="Latreille P."/>
            <person name="Ligon L.S."/>
            <person name="Lu J."/>
            <person name="Maerk M."/>
            <person name="Miller N.M."/>
            <person name="Norton S."/>
            <person name="O'Carroll I.P."/>
            <person name="Paulsen I."/>
            <person name="Raulfs E.C."/>
            <person name="Roemer R."/>
            <person name="Rosser J."/>
            <person name="Segura D."/>
            <person name="Slater S."/>
            <person name="Stricklin S.L."/>
            <person name="Studholme D.J."/>
            <person name="Sun J."/>
            <person name="Viana C.J."/>
            <person name="Wallin E."/>
            <person name="Wang B."/>
            <person name="Wheeler C."/>
            <person name="Zhu H."/>
            <person name="Dean D.R."/>
            <person name="Dixon R."/>
            <person name="Wood D."/>
        </authorList>
    </citation>
    <scope>NUCLEOTIDE SEQUENCE [LARGE SCALE GENOMIC DNA]</scope>
    <source>
        <strain>DJ / ATCC BAA-1303</strain>
    </source>
</reference>
<name>COAD_AZOVD</name>
<feature type="chain" id="PRO_1000203413" description="Phosphopantetheine adenylyltransferase">
    <location>
        <begin position="1"/>
        <end position="159"/>
    </location>
</feature>
<feature type="binding site" evidence="1">
    <location>
        <begin position="9"/>
        <end position="10"/>
    </location>
    <ligand>
        <name>ATP</name>
        <dbReference type="ChEBI" id="CHEBI:30616"/>
    </ligand>
</feature>
<feature type="binding site" evidence="1">
    <location>
        <position position="9"/>
    </location>
    <ligand>
        <name>substrate</name>
    </ligand>
</feature>
<feature type="binding site" evidence="1">
    <location>
        <position position="17"/>
    </location>
    <ligand>
        <name>ATP</name>
        <dbReference type="ChEBI" id="CHEBI:30616"/>
    </ligand>
</feature>
<feature type="binding site" evidence="1">
    <location>
        <position position="41"/>
    </location>
    <ligand>
        <name>substrate</name>
    </ligand>
</feature>
<feature type="binding site" evidence="1">
    <location>
        <position position="73"/>
    </location>
    <ligand>
        <name>substrate</name>
    </ligand>
</feature>
<feature type="binding site" evidence="1">
    <location>
        <position position="87"/>
    </location>
    <ligand>
        <name>substrate</name>
    </ligand>
</feature>
<feature type="binding site" evidence="1">
    <location>
        <begin position="88"/>
        <end position="90"/>
    </location>
    <ligand>
        <name>ATP</name>
        <dbReference type="ChEBI" id="CHEBI:30616"/>
    </ligand>
</feature>
<feature type="binding site" evidence="1">
    <location>
        <position position="98"/>
    </location>
    <ligand>
        <name>ATP</name>
        <dbReference type="ChEBI" id="CHEBI:30616"/>
    </ligand>
</feature>
<feature type="binding site" evidence="1">
    <location>
        <begin position="123"/>
        <end position="129"/>
    </location>
    <ligand>
        <name>ATP</name>
        <dbReference type="ChEBI" id="CHEBI:30616"/>
    </ligand>
</feature>
<feature type="site" description="Transition state stabilizer" evidence="1">
    <location>
        <position position="17"/>
    </location>
</feature>
<dbReference type="EC" id="2.7.7.3" evidence="1"/>
<dbReference type="EMBL" id="CP001157">
    <property type="protein sequence ID" value="ACO76609.1"/>
    <property type="molecule type" value="Genomic_DNA"/>
</dbReference>
<dbReference type="RefSeq" id="WP_012699037.1">
    <property type="nucleotide sequence ID" value="NC_012560.1"/>
</dbReference>
<dbReference type="SMR" id="C1DIB2"/>
<dbReference type="STRING" id="322710.Avin_03490"/>
<dbReference type="EnsemblBacteria" id="ACO76609">
    <property type="protein sequence ID" value="ACO76609"/>
    <property type="gene ID" value="Avin_03490"/>
</dbReference>
<dbReference type="GeneID" id="88183797"/>
<dbReference type="KEGG" id="avn:Avin_03490"/>
<dbReference type="eggNOG" id="COG0669">
    <property type="taxonomic scope" value="Bacteria"/>
</dbReference>
<dbReference type="HOGENOM" id="CLU_100149_0_1_6"/>
<dbReference type="OrthoDB" id="9806661at2"/>
<dbReference type="UniPathway" id="UPA00241">
    <property type="reaction ID" value="UER00355"/>
</dbReference>
<dbReference type="Proteomes" id="UP000002424">
    <property type="component" value="Chromosome"/>
</dbReference>
<dbReference type="GO" id="GO:0005737">
    <property type="term" value="C:cytoplasm"/>
    <property type="evidence" value="ECO:0007669"/>
    <property type="project" value="UniProtKB-SubCell"/>
</dbReference>
<dbReference type="GO" id="GO:0005524">
    <property type="term" value="F:ATP binding"/>
    <property type="evidence" value="ECO:0007669"/>
    <property type="project" value="UniProtKB-KW"/>
</dbReference>
<dbReference type="GO" id="GO:0004595">
    <property type="term" value="F:pantetheine-phosphate adenylyltransferase activity"/>
    <property type="evidence" value="ECO:0007669"/>
    <property type="project" value="UniProtKB-UniRule"/>
</dbReference>
<dbReference type="GO" id="GO:0015937">
    <property type="term" value="P:coenzyme A biosynthetic process"/>
    <property type="evidence" value="ECO:0007669"/>
    <property type="project" value="UniProtKB-UniRule"/>
</dbReference>
<dbReference type="CDD" id="cd02163">
    <property type="entry name" value="PPAT"/>
    <property type="match status" value="1"/>
</dbReference>
<dbReference type="Gene3D" id="3.40.50.620">
    <property type="entry name" value="HUPs"/>
    <property type="match status" value="1"/>
</dbReference>
<dbReference type="HAMAP" id="MF_00151">
    <property type="entry name" value="PPAT_bact"/>
    <property type="match status" value="1"/>
</dbReference>
<dbReference type="InterPro" id="IPR004821">
    <property type="entry name" value="Cyt_trans-like"/>
</dbReference>
<dbReference type="InterPro" id="IPR001980">
    <property type="entry name" value="PPAT"/>
</dbReference>
<dbReference type="InterPro" id="IPR014729">
    <property type="entry name" value="Rossmann-like_a/b/a_fold"/>
</dbReference>
<dbReference type="NCBIfam" id="TIGR01510">
    <property type="entry name" value="coaD_prev_kdtB"/>
    <property type="match status" value="1"/>
</dbReference>
<dbReference type="NCBIfam" id="TIGR00125">
    <property type="entry name" value="cyt_tran_rel"/>
    <property type="match status" value="1"/>
</dbReference>
<dbReference type="PANTHER" id="PTHR21342">
    <property type="entry name" value="PHOSPHOPANTETHEINE ADENYLYLTRANSFERASE"/>
    <property type="match status" value="1"/>
</dbReference>
<dbReference type="PANTHER" id="PTHR21342:SF1">
    <property type="entry name" value="PHOSPHOPANTETHEINE ADENYLYLTRANSFERASE"/>
    <property type="match status" value="1"/>
</dbReference>
<dbReference type="Pfam" id="PF01467">
    <property type="entry name" value="CTP_transf_like"/>
    <property type="match status" value="1"/>
</dbReference>
<dbReference type="PRINTS" id="PR01020">
    <property type="entry name" value="LPSBIOSNTHSS"/>
</dbReference>
<dbReference type="SUPFAM" id="SSF52374">
    <property type="entry name" value="Nucleotidylyl transferase"/>
    <property type="match status" value="1"/>
</dbReference>
<protein>
    <recommendedName>
        <fullName evidence="1">Phosphopantetheine adenylyltransferase</fullName>
        <ecNumber evidence="1">2.7.7.3</ecNumber>
    </recommendedName>
    <alternativeName>
        <fullName evidence="1">Dephospho-CoA pyrophosphorylase</fullName>
    </alternativeName>
    <alternativeName>
        <fullName evidence="1">Pantetheine-phosphate adenylyltransferase</fullName>
        <shortName evidence="1">PPAT</shortName>
    </alternativeName>
</protein>
<organism>
    <name type="scientific">Azotobacter vinelandii (strain DJ / ATCC BAA-1303)</name>
    <dbReference type="NCBI Taxonomy" id="322710"/>
    <lineage>
        <taxon>Bacteria</taxon>
        <taxon>Pseudomonadati</taxon>
        <taxon>Pseudomonadota</taxon>
        <taxon>Gammaproteobacteria</taxon>
        <taxon>Pseudomonadales</taxon>
        <taxon>Pseudomonadaceae</taxon>
        <taxon>Azotobacter</taxon>
    </lineage>
</organism>
<gene>
    <name evidence="1" type="primary">coaD</name>
    <name type="ordered locus">Avin_03490</name>
</gene>
<comment type="function">
    <text evidence="1">Reversibly transfers an adenylyl group from ATP to 4'-phosphopantetheine, yielding dephospho-CoA (dPCoA) and pyrophosphate.</text>
</comment>
<comment type="catalytic activity">
    <reaction evidence="1">
        <text>(R)-4'-phosphopantetheine + ATP + H(+) = 3'-dephospho-CoA + diphosphate</text>
        <dbReference type="Rhea" id="RHEA:19801"/>
        <dbReference type="ChEBI" id="CHEBI:15378"/>
        <dbReference type="ChEBI" id="CHEBI:30616"/>
        <dbReference type="ChEBI" id="CHEBI:33019"/>
        <dbReference type="ChEBI" id="CHEBI:57328"/>
        <dbReference type="ChEBI" id="CHEBI:61723"/>
        <dbReference type="EC" id="2.7.7.3"/>
    </reaction>
</comment>
<comment type="cofactor">
    <cofactor evidence="1">
        <name>Mg(2+)</name>
        <dbReference type="ChEBI" id="CHEBI:18420"/>
    </cofactor>
</comment>
<comment type="pathway">
    <text evidence="1">Cofactor biosynthesis; coenzyme A biosynthesis; CoA from (R)-pantothenate: step 4/5.</text>
</comment>
<comment type="subunit">
    <text evidence="1">Homohexamer.</text>
</comment>
<comment type="subcellular location">
    <subcellularLocation>
        <location evidence="1">Cytoplasm</location>
    </subcellularLocation>
</comment>
<comment type="similarity">
    <text evidence="1">Belongs to the bacterial CoaD family.</text>
</comment>
<accession>C1DIB2</accession>
<evidence type="ECO:0000255" key="1">
    <source>
        <dbReference type="HAMAP-Rule" id="MF_00151"/>
    </source>
</evidence>
<sequence length="159" mass="17823">MNRVIYPGTFDPITKGHGDLVERAAKLFDHVIIAVAASPKKNPLFSLDKRVELAREVTRHLPNVEVLGFSSLLAQFAREQKANALLRGLRAVSDFEYEFQLANMNRQLAPEVESLFLTPSEKYSYISSTLVREIAALGGNIEQFVHPAVADALRERFRA</sequence>
<proteinExistence type="inferred from homology"/>
<keyword id="KW-0067">ATP-binding</keyword>
<keyword id="KW-0173">Coenzyme A biosynthesis</keyword>
<keyword id="KW-0963">Cytoplasm</keyword>
<keyword id="KW-0460">Magnesium</keyword>
<keyword id="KW-0547">Nucleotide-binding</keyword>
<keyword id="KW-0548">Nucleotidyltransferase</keyword>
<keyword id="KW-0808">Transferase</keyword>